<reference key="1">
    <citation type="submission" date="2007-02" db="EMBL/GenBank/DDBJ databases">
        <title>Complete sequence of Clostridium thermocellum ATCC 27405.</title>
        <authorList>
            <consortium name="US DOE Joint Genome Institute"/>
            <person name="Copeland A."/>
            <person name="Lucas S."/>
            <person name="Lapidus A."/>
            <person name="Barry K."/>
            <person name="Detter J.C."/>
            <person name="Glavina del Rio T."/>
            <person name="Hammon N."/>
            <person name="Israni S."/>
            <person name="Dalin E."/>
            <person name="Tice H."/>
            <person name="Pitluck S."/>
            <person name="Chertkov O."/>
            <person name="Brettin T."/>
            <person name="Bruce D."/>
            <person name="Han C."/>
            <person name="Tapia R."/>
            <person name="Gilna P."/>
            <person name="Schmutz J."/>
            <person name="Larimer F."/>
            <person name="Land M."/>
            <person name="Hauser L."/>
            <person name="Kyrpides N."/>
            <person name="Mikhailova N."/>
            <person name="Wu J.H.D."/>
            <person name="Newcomb M."/>
            <person name="Richardson P."/>
        </authorList>
    </citation>
    <scope>NUCLEOTIDE SEQUENCE [LARGE SCALE GENOMIC DNA]</scope>
    <source>
        <strain>ATCC 27405 / DSM 1237 / JCM 9322 / NBRC 103400 / NCIMB 10682 / NRRL B-4536 / VPI 7372</strain>
    </source>
</reference>
<sequence length="433" mass="47103">MKQYLEIESVFAREILDSRGNPTVEVEVIAEGGFVGRAAVPSGASTGAFEAVELRDNDKNRYLGKGVQKAVENVNNIIAPEVEGMNVFDQAAVDNLMISLDGTPNKSKLGANAILGVSLATAKAAAEALGLSLYQYIGGVNAKTLPVPMMNIINGGKHADNSVNIQEFMIMPVGASSFRHALQMCAEVFHNLKKVLKDKGYSTAVGDEGGFAPNLKTDEEAIQVILEAVEKAGYKPGDDFRLAIDAASTEMYQEDGTYLFWKSGVKKTKEEMINYWEELVNKYPIISLEDGVAEEDWEGWKMLTERLGKRIQLVGDDLFVTNTTRLKKGIELGVANSILIKVNQIGTLTETLDAIEMANRAGYTAVVSHRSGETEDATIADIAVATNAGQIKTGAPSRTDRVAKYNQLLRIEEEIGAVSRYPGLDAWFNLKKK</sequence>
<keyword id="KW-0963">Cytoplasm</keyword>
<keyword id="KW-0324">Glycolysis</keyword>
<keyword id="KW-0456">Lyase</keyword>
<keyword id="KW-0460">Magnesium</keyword>
<keyword id="KW-0479">Metal-binding</keyword>
<keyword id="KW-1185">Reference proteome</keyword>
<keyword id="KW-0964">Secreted</keyword>
<comment type="function">
    <text evidence="1">Catalyzes the reversible conversion of 2-phosphoglycerate (2-PG) into phosphoenolpyruvate (PEP). It is essential for the degradation of carbohydrates via glycolysis.</text>
</comment>
<comment type="catalytic activity">
    <reaction evidence="1">
        <text>(2R)-2-phosphoglycerate = phosphoenolpyruvate + H2O</text>
        <dbReference type="Rhea" id="RHEA:10164"/>
        <dbReference type="ChEBI" id="CHEBI:15377"/>
        <dbReference type="ChEBI" id="CHEBI:58289"/>
        <dbReference type="ChEBI" id="CHEBI:58702"/>
        <dbReference type="EC" id="4.2.1.11"/>
    </reaction>
</comment>
<comment type="cofactor">
    <cofactor evidence="1">
        <name>Mg(2+)</name>
        <dbReference type="ChEBI" id="CHEBI:18420"/>
    </cofactor>
    <text evidence="1">Binds a second Mg(2+) ion via substrate during catalysis.</text>
</comment>
<comment type="pathway">
    <text evidence="1">Carbohydrate degradation; glycolysis; pyruvate from D-glyceraldehyde 3-phosphate: step 4/5.</text>
</comment>
<comment type="subcellular location">
    <subcellularLocation>
        <location evidence="1">Cytoplasm</location>
    </subcellularLocation>
    <subcellularLocation>
        <location evidence="1">Secreted</location>
    </subcellularLocation>
    <subcellularLocation>
        <location evidence="1">Cell surface</location>
    </subcellularLocation>
    <text evidence="1">Fractions of enolase are present in both the cytoplasm and on the cell surface.</text>
</comment>
<comment type="similarity">
    <text evidence="1">Belongs to the enolase family.</text>
</comment>
<name>ENO_ACET2</name>
<accession>A3DBQ5</accession>
<feature type="chain" id="PRO_1000019204" description="Enolase">
    <location>
        <begin position="1"/>
        <end position="433"/>
    </location>
</feature>
<feature type="active site" description="Proton donor" evidence="1">
    <location>
        <position position="208"/>
    </location>
</feature>
<feature type="active site" description="Proton acceptor" evidence="1">
    <location>
        <position position="341"/>
    </location>
</feature>
<feature type="binding site" evidence="1">
    <location>
        <position position="166"/>
    </location>
    <ligand>
        <name>(2R)-2-phosphoglycerate</name>
        <dbReference type="ChEBI" id="CHEBI:58289"/>
    </ligand>
</feature>
<feature type="binding site" evidence="1">
    <location>
        <position position="245"/>
    </location>
    <ligand>
        <name>Mg(2+)</name>
        <dbReference type="ChEBI" id="CHEBI:18420"/>
    </ligand>
</feature>
<feature type="binding site" evidence="1">
    <location>
        <position position="289"/>
    </location>
    <ligand>
        <name>Mg(2+)</name>
        <dbReference type="ChEBI" id="CHEBI:18420"/>
    </ligand>
</feature>
<feature type="binding site" evidence="1">
    <location>
        <position position="316"/>
    </location>
    <ligand>
        <name>Mg(2+)</name>
        <dbReference type="ChEBI" id="CHEBI:18420"/>
    </ligand>
</feature>
<feature type="binding site" evidence="1">
    <location>
        <position position="341"/>
    </location>
    <ligand>
        <name>(2R)-2-phosphoglycerate</name>
        <dbReference type="ChEBI" id="CHEBI:58289"/>
    </ligand>
</feature>
<feature type="binding site" evidence="1">
    <location>
        <position position="370"/>
    </location>
    <ligand>
        <name>(2R)-2-phosphoglycerate</name>
        <dbReference type="ChEBI" id="CHEBI:58289"/>
    </ligand>
</feature>
<feature type="binding site" evidence="1">
    <location>
        <position position="371"/>
    </location>
    <ligand>
        <name>(2R)-2-phosphoglycerate</name>
        <dbReference type="ChEBI" id="CHEBI:58289"/>
    </ligand>
</feature>
<feature type="binding site" evidence="1">
    <location>
        <position position="392"/>
    </location>
    <ligand>
        <name>(2R)-2-phosphoglycerate</name>
        <dbReference type="ChEBI" id="CHEBI:58289"/>
    </ligand>
</feature>
<evidence type="ECO:0000255" key="1">
    <source>
        <dbReference type="HAMAP-Rule" id="MF_00318"/>
    </source>
</evidence>
<proteinExistence type="inferred from homology"/>
<organism>
    <name type="scientific">Acetivibrio thermocellus (strain ATCC 27405 / DSM 1237 / JCM 9322 / NBRC 103400 / NCIMB 10682 / NRRL B-4536 / VPI 7372)</name>
    <name type="common">Clostridium thermocellum</name>
    <dbReference type="NCBI Taxonomy" id="203119"/>
    <lineage>
        <taxon>Bacteria</taxon>
        <taxon>Bacillati</taxon>
        <taxon>Bacillota</taxon>
        <taxon>Clostridia</taxon>
        <taxon>Eubacteriales</taxon>
        <taxon>Oscillospiraceae</taxon>
        <taxon>Acetivibrio</taxon>
    </lineage>
</organism>
<dbReference type="EC" id="4.2.1.11" evidence="1"/>
<dbReference type="EMBL" id="CP000568">
    <property type="protein sequence ID" value="ABN51384.1"/>
    <property type="molecule type" value="Genomic_DNA"/>
</dbReference>
<dbReference type="RefSeq" id="WP_003512177.1">
    <property type="nucleotide sequence ID" value="NC_009012.1"/>
</dbReference>
<dbReference type="SMR" id="A3DBQ5"/>
<dbReference type="STRING" id="203119.Cthe_0143"/>
<dbReference type="GeneID" id="35804433"/>
<dbReference type="KEGG" id="cth:Cthe_0143"/>
<dbReference type="eggNOG" id="COG0148">
    <property type="taxonomic scope" value="Bacteria"/>
</dbReference>
<dbReference type="HOGENOM" id="CLU_031223_2_1_9"/>
<dbReference type="OrthoDB" id="9804716at2"/>
<dbReference type="UniPathway" id="UPA00109">
    <property type="reaction ID" value="UER00187"/>
</dbReference>
<dbReference type="Proteomes" id="UP000002145">
    <property type="component" value="Chromosome"/>
</dbReference>
<dbReference type="GO" id="GO:0009986">
    <property type="term" value="C:cell surface"/>
    <property type="evidence" value="ECO:0007669"/>
    <property type="project" value="UniProtKB-SubCell"/>
</dbReference>
<dbReference type="GO" id="GO:0005576">
    <property type="term" value="C:extracellular region"/>
    <property type="evidence" value="ECO:0007669"/>
    <property type="project" value="UniProtKB-SubCell"/>
</dbReference>
<dbReference type="GO" id="GO:0000015">
    <property type="term" value="C:phosphopyruvate hydratase complex"/>
    <property type="evidence" value="ECO:0007669"/>
    <property type="project" value="InterPro"/>
</dbReference>
<dbReference type="GO" id="GO:0000287">
    <property type="term" value="F:magnesium ion binding"/>
    <property type="evidence" value="ECO:0007669"/>
    <property type="project" value="UniProtKB-UniRule"/>
</dbReference>
<dbReference type="GO" id="GO:0004634">
    <property type="term" value="F:phosphopyruvate hydratase activity"/>
    <property type="evidence" value="ECO:0007669"/>
    <property type="project" value="UniProtKB-UniRule"/>
</dbReference>
<dbReference type="GO" id="GO:0006096">
    <property type="term" value="P:glycolytic process"/>
    <property type="evidence" value="ECO:0007669"/>
    <property type="project" value="UniProtKB-UniRule"/>
</dbReference>
<dbReference type="CDD" id="cd03313">
    <property type="entry name" value="enolase"/>
    <property type="match status" value="1"/>
</dbReference>
<dbReference type="FunFam" id="3.20.20.120:FF:000001">
    <property type="entry name" value="Enolase"/>
    <property type="match status" value="1"/>
</dbReference>
<dbReference type="FunFam" id="3.30.390.10:FF:000001">
    <property type="entry name" value="Enolase"/>
    <property type="match status" value="1"/>
</dbReference>
<dbReference type="Gene3D" id="3.20.20.120">
    <property type="entry name" value="Enolase-like C-terminal domain"/>
    <property type="match status" value="1"/>
</dbReference>
<dbReference type="Gene3D" id="3.30.390.10">
    <property type="entry name" value="Enolase-like, N-terminal domain"/>
    <property type="match status" value="1"/>
</dbReference>
<dbReference type="HAMAP" id="MF_00318">
    <property type="entry name" value="Enolase"/>
    <property type="match status" value="1"/>
</dbReference>
<dbReference type="InterPro" id="IPR000941">
    <property type="entry name" value="Enolase"/>
</dbReference>
<dbReference type="InterPro" id="IPR036849">
    <property type="entry name" value="Enolase-like_C_sf"/>
</dbReference>
<dbReference type="InterPro" id="IPR029017">
    <property type="entry name" value="Enolase-like_N"/>
</dbReference>
<dbReference type="InterPro" id="IPR020810">
    <property type="entry name" value="Enolase_C"/>
</dbReference>
<dbReference type="InterPro" id="IPR020809">
    <property type="entry name" value="Enolase_CS"/>
</dbReference>
<dbReference type="InterPro" id="IPR020811">
    <property type="entry name" value="Enolase_N"/>
</dbReference>
<dbReference type="NCBIfam" id="TIGR01060">
    <property type="entry name" value="eno"/>
    <property type="match status" value="1"/>
</dbReference>
<dbReference type="PANTHER" id="PTHR11902">
    <property type="entry name" value="ENOLASE"/>
    <property type="match status" value="1"/>
</dbReference>
<dbReference type="PANTHER" id="PTHR11902:SF1">
    <property type="entry name" value="ENOLASE"/>
    <property type="match status" value="1"/>
</dbReference>
<dbReference type="Pfam" id="PF00113">
    <property type="entry name" value="Enolase_C"/>
    <property type="match status" value="1"/>
</dbReference>
<dbReference type="Pfam" id="PF03952">
    <property type="entry name" value="Enolase_N"/>
    <property type="match status" value="1"/>
</dbReference>
<dbReference type="PIRSF" id="PIRSF001400">
    <property type="entry name" value="Enolase"/>
    <property type="match status" value="1"/>
</dbReference>
<dbReference type="PRINTS" id="PR00148">
    <property type="entry name" value="ENOLASE"/>
</dbReference>
<dbReference type="SFLD" id="SFLDF00002">
    <property type="entry name" value="enolase"/>
    <property type="match status" value="1"/>
</dbReference>
<dbReference type="SFLD" id="SFLDG00178">
    <property type="entry name" value="enolase"/>
    <property type="match status" value="1"/>
</dbReference>
<dbReference type="SMART" id="SM01192">
    <property type="entry name" value="Enolase_C"/>
    <property type="match status" value="1"/>
</dbReference>
<dbReference type="SMART" id="SM01193">
    <property type="entry name" value="Enolase_N"/>
    <property type="match status" value="1"/>
</dbReference>
<dbReference type="SUPFAM" id="SSF51604">
    <property type="entry name" value="Enolase C-terminal domain-like"/>
    <property type="match status" value="1"/>
</dbReference>
<dbReference type="SUPFAM" id="SSF54826">
    <property type="entry name" value="Enolase N-terminal domain-like"/>
    <property type="match status" value="1"/>
</dbReference>
<dbReference type="PROSITE" id="PS00164">
    <property type="entry name" value="ENOLASE"/>
    <property type="match status" value="1"/>
</dbReference>
<gene>
    <name evidence="1" type="primary">eno</name>
    <name type="ordered locus">Cthe_0143</name>
</gene>
<protein>
    <recommendedName>
        <fullName evidence="1">Enolase</fullName>
        <ecNumber evidence="1">4.2.1.11</ecNumber>
    </recommendedName>
    <alternativeName>
        <fullName evidence="1">2-phospho-D-glycerate hydro-lyase</fullName>
    </alternativeName>
    <alternativeName>
        <fullName evidence="1">2-phosphoglycerate dehydratase</fullName>
    </alternativeName>
</protein>